<proteinExistence type="evidence at protein level"/>
<keyword id="KW-0167">Capsid protein</keyword>
<keyword id="KW-0903">Direct protein sequencing</keyword>
<keyword id="KW-1185">Reference proteome</keyword>
<keyword id="KW-0946">Virion</keyword>
<sequence>MAENDDAVLTAAVGYVYVGAAGTAAPTPALLKTIDLSKPETWTGATGWTSVGHTSRGTLPEFGFEGGESEVKGSWQKKKLREITTEDPIDYVTVLLHQFDEQSLGLYYGPNASETPGVFGVKTGQTNEKAVLVVIEDGDMRLGHHAHKAGVRRDDAIELPIDDLAALPVRFTYLDHEDELPFSWINEDLFNVPEVPEG</sequence>
<organism>
    <name type="scientific">Mycobacterium phage L5</name>
    <name type="common">Mycobacteriophage L5</name>
    <dbReference type="NCBI Taxonomy" id="31757"/>
    <lineage>
        <taxon>Viruses</taxon>
        <taxon>Duplodnaviria</taxon>
        <taxon>Heunggongvirae</taxon>
        <taxon>Uroviricota</taxon>
        <taxon>Caudoviricetes</taxon>
        <taxon>Fromanvirus</taxon>
    </lineage>
</organism>
<protein>
    <recommendedName>
        <fullName>Major tail protein Gp23</fullName>
    </recommendedName>
    <alternativeName>
        <fullName>Major coat protein</fullName>
    </alternativeName>
</protein>
<evidence type="ECO:0000269" key="1">
    <source>
    </source>
</evidence>
<evidence type="ECO:0000305" key="2"/>
<organismHost>
    <name type="scientific">Mycobacterium</name>
    <dbReference type="NCBI Taxonomy" id="1763"/>
</organismHost>
<feature type="initiator methionine" description="Removed; by host" evidence="1">
    <location>
        <position position="1"/>
    </location>
</feature>
<feature type="chain" id="PRO_0000164735" description="Major tail protein Gp23">
    <location>
        <begin position="2"/>
        <end position="198"/>
    </location>
</feature>
<gene>
    <name type="primary">23</name>
</gene>
<comment type="subcellular location">
    <subcellularLocation>
        <location evidence="2">Virion</location>
    </subcellularLocation>
</comment>
<reference key="1">
    <citation type="journal article" date="1993" name="Mol. Microbiol.">
        <title>DNA sequence, structure and gene expression of mycobacteriophage L5: a phage system for mycobacterial genetics.</title>
        <authorList>
            <person name="Hatfull G.F."/>
            <person name="Sarkis G.J."/>
        </authorList>
    </citation>
    <scope>NUCLEOTIDE SEQUENCE [GENOMIC DNA]</scope>
    <scope>PROTEIN SEQUENCE OF 2-17</scope>
</reference>
<name>VG23_BPML5</name>
<accession>Q05229</accession>
<dbReference type="EMBL" id="Z18946">
    <property type="protein sequence ID" value="CAA79399.1"/>
    <property type="molecule type" value="Genomic_DNA"/>
</dbReference>
<dbReference type="PIR" id="S30968">
    <property type="entry name" value="S30968"/>
</dbReference>
<dbReference type="RefSeq" id="NP_039687.1">
    <property type="nucleotide sequence ID" value="NC_001335.1"/>
</dbReference>
<dbReference type="SMR" id="Q05229"/>
<dbReference type="GeneID" id="2942952"/>
<dbReference type="KEGG" id="vg:2942952"/>
<dbReference type="OrthoDB" id="6201at10239"/>
<dbReference type="Proteomes" id="UP000002123">
    <property type="component" value="Genome"/>
</dbReference>
<dbReference type="GO" id="GO:0019028">
    <property type="term" value="C:viral capsid"/>
    <property type="evidence" value="ECO:0007669"/>
    <property type="project" value="UniProtKB-KW"/>
</dbReference>